<gene>
    <name evidence="1" type="primary">glgB</name>
    <name type="ordered locus">Daro_0586</name>
</gene>
<organism>
    <name type="scientific">Dechloromonas aromatica (strain RCB)</name>
    <dbReference type="NCBI Taxonomy" id="159087"/>
    <lineage>
        <taxon>Bacteria</taxon>
        <taxon>Pseudomonadati</taxon>
        <taxon>Pseudomonadota</taxon>
        <taxon>Betaproteobacteria</taxon>
        <taxon>Rhodocyclales</taxon>
        <taxon>Azonexaceae</taxon>
        <taxon>Dechloromonas</taxon>
    </lineage>
</organism>
<reference key="1">
    <citation type="journal article" date="2009" name="BMC Genomics">
        <title>Metabolic analysis of the soil microbe Dechloromonas aromatica str. RCB: indications of a surprisingly complex life-style and cryptic anaerobic pathways for aromatic degradation.</title>
        <authorList>
            <person name="Salinero K.K."/>
            <person name="Keller K."/>
            <person name="Feil W.S."/>
            <person name="Feil H."/>
            <person name="Trong S."/>
            <person name="Di Bartolo G."/>
            <person name="Lapidus A."/>
        </authorList>
    </citation>
    <scope>NUCLEOTIDE SEQUENCE [LARGE SCALE GENOMIC DNA]</scope>
    <source>
        <strain>RCB</strain>
    </source>
</reference>
<feature type="chain" id="PRO_0000260649" description="1,4-alpha-glucan branching enzyme GlgB">
    <location>
        <begin position="1"/>
        <end position="621"/>
    </location>
</feature>
<feature type="active site" description="Nucleophile" evidence="1">
    <location>
        <position position="302"/>
    </location>
</feature>
<feature type="active site" description="Proton donor" evidence="1">
    <location>
        <position position="355"/>
    </location>
</feature>
<evidence type="ECO:0000255" key="1">
    <source>
        <dbReference type="HAMAP-Rule" id="MF_00685"/>
    </source>
</evidence>
<keyword id="KW-0119">Carbohydrate metabolism</keyword>
<keyword id="KW-0320">Glycogen biosynthesis</keyword>
<keyword id="KW-0321">Glycogen metabolism</keyword>
<keyword id="KW-0328">Glycosyltransferase</keyword>
<keyword id="KW-0808">Transferase</keyword>
<proteinExistence type="inferred from homology"/>
<comment type="function">
    <text evidence="1">Catalyzes the formation of the alpha-1,6-glucosidic linkages in glycogen by scission of a 1,4-alpha-linked oligosaccharide from growing alpha-1,4-glucan chains and the subsequent attachment of the oligosaccharide to the alpha-1,6 position.</text>
</comment>
<comment type="catalytic activity">
    <reaction evidence="1">
        <text>Transfers a segment of a (1-&gt;4)-alpha-D-glucan chain to a primary hydroxy group in a similar glucan chain.</text>
        <dbReference type="EC" id="2.4.1.18"/>
    </reaction>
</comment>
<comment type="pathway">
    <text evidence="1">Glycan biosynthesis; glycogen biosynthesis.</text>
</comment>
<comment type="subunit">
    <text evidence="1">Monomer.</text>
</comment>
<comment type="similarity">
    <text evidence="1">Belongs to the glycosyl hydrolase 13 family. GlgB subfamily.</text>
</comment>
<name>GLGB_DECAR</name>
<accession>Q47II8</accession>
<sequence length="621" mass="70296">MQHADALYLFNEGRNNQAYRLLGAHADISGTTFRVWAPNASRVSVVGDFNGWHGDVHQLHPLGESGVWEIAVAEAHTGNLYRFEITNRHTGDKLIKSDPYGRGFELRPGSAAYVVPPSMHVWGDADWLQQRAGWDWQQAPVNIYEVHPGSWMRHPDGKPYLWGELAERLIPYALAQGYTHLELLPITEHPLDESWGYQTTGYFAPTSRYGSADELRAFVDACHQAGLGVLLDWVPGHFPQDDWALARFDGTALYEHEDPRLGLHADWGTHIFNYGRHEVRSFLMSSAHWWLSEFHFDGLRVDAVASMLYLDYSRKHGEWLPNKFGGRENLEAIDFLKQLNAMVHGDFPGALTIAEESTAWPMVSRPTYVGGLGFSMKWNMGWMNDSLRYFHRDPIYRRWHHSELTFGQIYAYSENYVLPFSHDEVVHGKGSLLGKMPGDTWQRYANLRLLLAWQVLTPGKKLMFMGCEFGQQGEWSEGRELDWGSLANPENAAAQRLSADLNRLYRDLPALHTQDFSALGFEWIDCNDSEHSVLSWLRWGKDGSFVVVVFNFTPVPQPAYRLGVPEAGTYVELLNTDSAFYGGSNLGNGGALTATKGEWMGRPANLEVTIPPLGAVVLRRE</sequence>
<protein>
    <recommendedName>
        <fullName evidence="1">1,4-alpha-glucan branching enzyme GlgB</fullName>
        <ecNumber evidence="1">2.4.1.18</ecNumber>
    </recommendedName>
    <alternativeName>
        <fullName evidence="1">1,4-alpha-D-glucan:1,4-alpha-D-glucan 6-glucosyl-transferase</fullName>
    </alternativeName>
    <alternativeName>
        <fullName evidence="1">Alpha-(1-&gt;4)-glucan branching enzyme</fullName>
    </alternativeName>
    <alternativeName>
        <fullName evidence="1">Glycogen branching enzyme</fullName>
        <shortName evidence="1">BE</shortName>
    </alternativeName>
</protein>
<dbReference type="EC" id="2.4.1.18" evidence="1"/>
<dbReference type="EMBL" id="CP000089">
    <property type="protein sequence ID" value="AAZ45343.1"/>
    <property type="molecule type" value="Genomic_DNA"/>
</dbReference>
<dbReference type="SMR" id="Q47II8"/>
<dbReference type="STRING" id="159087.Daro_0586"/>
<dbReference type="CAZy" id="CBM48">
    <property type="family name" value="Carbohydrate-Binding Module Family 48"/>
</dbReference>
<dbReference type="CAZy" id="GH13">
    <property type="family name" value="Glycoside Hydrolase Family 13"/>
</dbReference>
<dbReference type="KEGG" id="dar:Daro_0586"/>
<dbReference type="eggNOG" id="COG0296">
    <property type="taxonomic scope" value="Bacteria"/>
</dbReference>
<dbReference type="HOGENOM" id="CLU_004245_3_2_4"/>
<dbReference type="OrthoDB" id="9800174at2"/>
<dbReference type="UniPathway" id="UPA00164"/>
<dbReference type="GO" id="GO:0005829">
    <property type="term" value="C:cytosol"/>
    <property type="evidence" value="ECO:0007669"/>
    <property type="project" value="TreeGrafter"/>
</dbReference>
<dbReference type="GO" id="GO:0003844">
    <property type="term" value="F:1,4-alpha-glucan branching enzyme activity"/>
    <property type="evidence" value="ECO:0007669"/>
    <property type="project" value="UniProtKB-UniRule"/>
</dbReference>
<dbReference type="GO" id="GO:0043169">
    <property type="term" value="F:cation binding"/>
    <property type="evidence" value="ECO:0007669"/>
    <property type="project" value="InterPro"/>
</dbReference>
<dbReference type="GO" id="GO:0004553">
    <property type="term" value="F:hydrolase activity, hydrolyzing O-glycosyl compounds"/>
    <property type="evidence" value="ECO:0007669"/>
    <property type="project" value="InterPro"/>
</dbReference>
<dbReference type="GO" id="GO:0005978">
    <property type="term" value="P:glycogen biosynthetic process"/>
    <property type="evidence" value="ECO:0007669"/>
    <property type="project" value="UniProtKB-UniRule"/>
</dbReference>
<dbReference type="CDD" id="cd11322">
    <property type="entry name" value="AmyAc_Glg_BE"/>
    <property type="match status" value="1"/>
</dbReference>
<dbReference type="CDD" id="cd02855">
    <property type="entry name" value="E_set_GBE_prok_N"/>
    <property type="match status" value="1"/>
</dbReference>
<dbReference type="FunFam" id="2.60.40.1180:FF:000002">
    <property type="entry name" value="1,4-alpha-glucan branching enzyme GlgB"/>
    <property type="match status" value="1"/>
</dbReference>
<dbReference type="FunFam" id="3.20.20.80:FF:000003">
    <property type="entry name" value="1,4-alpha-glucan branching enzyme GlgB"/>
    <property type="match status" value="1"/>
</dbReference>
<dbReference type="Gene3D" id="3.20.20.80">
    <property type="entry name" value="Glycosidases"/>
    <property type="match status" value="1"/>
</dbReference>
<dbReference type="Gene3D" id="2.60.40.1180">
    <property type="entry name" value="Golgi alpha-mannosidase II"/>
    <property type="match status" value="1"/>
</dbReference>
<dbReference type="Gene3D" id="2.60.40.10">
    <property type="entry name" value="Immunoglobulins"/>
    <property type="match status" value="1"/>
</dbReference>
<dbReference type="HAMAP" id="MF_00685">
    <property type="entry name" value="GlgB"/>
    <property type="match status" value="1"/>
</dbReference>
<dbReference type="InterPro" id="IPR006048">
    <property type="entry name" value="A-amylase/branching_C"/>
</dbReference>
<dbReference type="InterPro" id="IPR037439">
    <property type="entry name" value="Branching_enzy"/>
</dbReference>
<dbReference type="InterPro" id="IPR006407">
    <property type="entry name" value="GlgB"/>
</dbReference>
<dbReference type="InterPro" id="IPR044143">
    <property type="entry name" value="GlgB_N_E_set_prok"/>
</dbReference>
<dbReference type="InterPro" id="IPR006047">
    <property type="entry name" value="Glyco_hydro_13_cat_dom"/>
</dbReference>
<dbReference type="InterPro" id="IPR004193">
    <property type="entry name" value="Glyco_hydro_13_N"/>
</dbReference>
<dbReference type="InterPro" id="IPR013780">
    <property type="entry name" value="Glyco_hydro_b"/>
</dbReference>
<dbReference type="InterPro" id="IPR017853">
    <property type="entry name" value="Glycoside_hydrolase_SF"/>
</dbReference>
<dbReference type="InterPro" id="IPR013783">
    <property type="entry name" value="Ig-like_fold"/>
</dbReference>
<dbReference type="InterPro" id="IPR014756">
    <property type="entry name" value="Ig_E-set"/>
</dbReference>
<dbReference type="NCBIfam" id="TIGR01515">
    <property type="entry name" value="branching_enzym"/>
    <property type="match status" value="1"/>
</dbReference>
<dbReference type="NCBIfam" id="NF003811">
    <property type="entry name" value="PRK05402.1"/>
    <property type="match status" value="1"/>
</dbReference>
<dbReference type="NCBIfam" id="NF008967">
    <property type="entry name" value="PRK12313.1"/>
    <property type="match status" value="1"/>
</dbReference>
<dbReference type="PANTHER" id="PTHR43651">
    <property type="entry name" value="1,4-ALPHA-GLUCAN-BRANCHING ENZYME"/>
    <property type="match status" value="1"/>
</dbReference>
<dbReference type="PANTHER" id="PTHR43651:SF3">
    <property type="entry name" value="1,4-ALPHA-GLUCAN-BRANCHING ENZYME"/>
    <property type="match status" value="1"/>
</dbReference>
<dbReference type="Pfam" id="PF00128">
    <property type="entry name" value="Alpha-amylase"/>
    <property type="match status" value="2"/>
</dbReference>
<dbReference type="Pfam" id="PF02806">
    <property type="entry name" value="Alpha-amylase_C"/>
    <property type="match status" value="1"/>
</dbReference>
<dbReference type="Pfam" id="PF02922">
    <property type="entry name" value="CBM_48"/>
    <property type="match status" value="1"/>
</dbReference>
<dbReference type="PIRSF" id="PIRSF000463">
    <property type="entry name" value="GlgB"/>
    <property type="match status" value="1"/>
</dbReference>
<dbReference type="SMART" id="SM00642">
    <property type="entry name" value="Aamy"/>
    <property type="match status" value="1"/>
</dbReference>
<dbReference type="SUPFAM" id="SSF51445">
    <property type="entry name" value="(Trans)glycosidases"/>
    <property type="match status" value="1"/>
</dbReference>
<dbReference type="SUPFAM" id="SSF81296">
    <property type="entry name" value="E set domains"/>
    <property type="match status" value="1"/>
</dbReference>
<dbReference type="SUPFAM" id="SSF51011">
    <property type="entry name" value="Glycosyl hydrolase domain"/>
    <property type="match status" value="1"/>
</dbReference>